<protein>
    <recommendedName>
        <fullName evidence="1">HTH-type transcriptional regulator MalT</fullName>
    </recommendedName>
    <alternativeName>
        <fullName evidence="1">ATP-dependent transcriptional activator MalT</fullName>
    </alternativeName>
</protein>
<keyword id="KW-0010">Activator</keyword>
<keyword id="KW-0067">ATP-binding</keyword>
<keyword id="KW-0119">Carbohydrate metabolism</keyword>
<keyword id="KW-0238">DNA-binding</keyword>
<keyword id="KW-0547">Nucleotide-binding</keyword>
<keyword id="KW-1185">Reference proteome</keyword>
<keyword id="KW-0804">Transcription</keyword>
<keyword id="KW-0805">Transcription regulation</keyword>
<name>MALT_ECO57</name>
<gene>
    <name evidence="1" type="primary">malT</name>
    <name type="ordered locus">Z4774</name>
    <name type="ordered locus">ECs4260</name>
</gene>
<comment type="function">
    <text evidence="1">Positively regulates the transcription of the maltose regulon whose gene products are responsible for uptake and catabolism of malto-oligosaccharides. Specifically binds to the promoter region of its target genes, recognizing a short DNA motif called the MalT box.</text>
</comment>
<comment type="activity regulation">
    <text evidence="1">Activated by ATP and maltotriose, which are both required for DNA binding.</text>
</comment>
<comment type="subunit">
    <text evidence="1">Monomer in solution. Oligomerizes to an active state in the presence of the positive effectors ATP and maltotriose.</text>
</comment>
<comment type="similarity">
    <text evidence="1">Belongs to the MalT family.</text>
</comment>
<sequence length="901" mass="103016">MLIPSKLSRPVRLDHTVVRERLLAKLSGANNFRLALITSPAGYGKTTLISQWAAGKNDIGWYSLDEGDNQQERFASYLIAAVQQATNGHCAICETMAQKRQYASLTSLFAQLFIELAEWHSPLYLVIDDYHLITNPVIHESMRFFIRHQPENLTLVVLSRNLPQLGIANLRVRDQLLEIGSQQLAFTHQEAKQFFDCRLSSPIEAAESSRICDDVSGWATALQLIALSARQNTHSAHKSARRLAGINASHLSDYLVDEVLDNVDLATRHFLLKSAILRSMNDALITRVTGEENGQMRLEEIERQGLFLQRMDDTGEWFCYHPLFGNFLRQRCQWELAAELPEIHRAAAESWMAQGFPSEAIHHALAAGDALMLRDILLNHAWSLFNHSELSLLEESLKALPWDSLLENPQLVLLQAWLMQSQHRYGEVNTLLARAEHEIKDIREGTMHAEFNALRAQVAINDGNPDEAERLAKLALEELPPGWFYSRIVATSVLGEVLHCKGELTRSLALMQQTEQMARQHDVWHYALWSLIQQSEILFAQGFLQTAWETQEKAFQLINEQHLEQLPMHEFLVRIRAQLLWAWARLDEAEASARSGIEVLSSYQPQQQLQCLAMLIQCSLARGDLDNARSQLNRLENLLGNGKYHSDWISNANKVRVIYWQMTGDKAAAANWLRHTAKPEFANNHFLQGQWRNIARAQILLGEFEPAEIVLEELNENARSLRLMSDLNRNLLLLNQLYWQAGRKSDAQRVLLDALKLANRTGFISHFVIEGEAMAQQLRQLIQLNTLPELEQHRAQRILREINQHHRHKFAHFDENFVERLLNHPEVPELIRTSPLTQREWQVLGLIYSGYSNEQIAGELEVAATTIKTHIRNLYQKLGVAHRQAAVQHAQKLLKMMGYGV</sequence>
<proteinExistence type="inferred from homology"/>
<evidence type="ECO:0000255" key="1">
    <source>
        <dbReference type="HAMAP-Rule" id="MF_01247"/>
    </source>
</evidence>
<accession>Q8X701</accession>
<feature type="chain" id="PRO_0000184165" description="HTH-type transcriptional regulator MalT">
    <location>
        <begin position="1"/>
        <end position="901"/>
    </location>
</feature>
<feature type="domain" description="HTH luxR-type" evidence="1">
    <location>
        <begin position="829"/>
        <end position="894"/>
    </location>
</feature>
<feature type="DNA-binding region" description="H-T-H motif" evidence="1">
    <location>
        <begin position="853"/>
        <end position="872"/>
    </location>
</feature>
<feature type="binding site" evidence="1">
    <location>
        <begin position="39"/>
        <end position="46"/>
    </location>
    <ligand>
        <name>ATP</name>
        <dbReference type="ChEBI" id="CHEBI:30616"/>
    </ligand>
</feature>
<dbReference type="EMBL" id="AE005174">
    <property type="protein sequence ID" value="AAG58520.1"/>
    <property type="molecule type" value="Genomic_DNA"/>
</dbReference>
<dbReference type="EMBL" id="BA000007">
    <property type="protein sequence ID" value="BAB37683.1"/>
    <property type="molecule type" value="Genomic_DNA"/>
</dbReference>
<dbReference type="PIR" id="D86007">
    <property type="entry name" value="D86007"/>
</dbReference>
<dbReference type="PIR" id="D91161">
    <property type="entry name" value="D91161"/>
</dbReference>
<dbReference type="RefSeq" id="NP_312287.1">
    <property type="nucleotide sequence ID" value="NC_002695.1"/>
</dbReference>
<dbReference type="RefSeq" id="WP_000906970.1">
    <property type="nucleotide sequence ID" value="NZ_VOAI01000004.1"/>
</dbReference>
<dbReference type="SMR" id="Q8X701"/>
<dbReference type="STRING" id="155864.Z4774"/>
<dbReference type="GeneID" id="75202261"/>
<dbReference type="GeneID" id="915884"/>
<dbReference type="KEGG" id="ece:Z4774"/>
<dbReference type="KEGG" id="ecs:ECs_4260"/>
<dbReference type="PATRIC" id="fig|386585.9.peg.4450"/>
<dbReference type="eggNOG" id="COG2909">
    <property type="taxonomic scope" value="Bacteria"/>
</dbReference>
<dbReference type="HOGENOM" id="CLU_006325_3_0_6"/>
<dbReference type="OMA" id="SDWVSNA"/>
<dbReference type="Proteomes" id="UP000000558">
    <property type="component" value="Chromosome"/>
</dbReference>
<dbReference type="Proteomes" id="UP000002519">
    <property type="component" value="Chromosome"/>
</dbReference>
<dbReference type="GO" id="GO:0005524">
    <property type="term" value="F:ATP binding"/>
    <property type="evidence" value="ECO:0007669"/>
    <property type="project" value="UniProtKB-UniRule"/>
</dbReference>
<dbReference type="GO" id="GO:0003677">
    <property type="term" value="F:DNA binding"/>
    <property type="evidence" value="ECO:0007669"/>
    <property type="project" value="UniProtKB-KW"/>
</dbReference>
<dbReference type="GO" id="GO:0003700">
    <property type="term" value="F:DNA-binding transcription factor activity"/>
    <property type="evidence" value="ECO:0007669"/>
    <property type="project" value="UniProtKB-UniRule"/>
</dbReference>
<dbReference type="GO" id="GO:0045913">
    <property type="term" value="P:positive regulation of carbohydrate metabolic process"/>
    <property type="evidence" value="ECO:0007669"/>
    <property type="project" value="UniProtKB-UniRule"/>
</dbReference>
<dbReference type="GO" id="GO:0045893">
    <property type="term" value="P:positive regulation of DNA-templated transcription"/>
    <property type="evidence" value="ECO:0007669"/>
    <property type="project" value="UniProtKB-UniRule"/>
</dbReference>
<dbReference type="CDD" id="cd06170">
    <property type="entry name" value="LuxR_C_like"/>
    <property type="match status" value="1"/>
</dbReference>
<dbReference type="FunFam" id="1.10.10.10:FF:000115">
    <property type="entry name" value="HTH-type transcriptional regulator MalT"/>
    <property type="match status" value="1"/>
</dbReference>
<dbReference type="FunFam" id="1.25.40.10:FF:000086">
    <property type="entry name" value="HTH-type transcriptional regulator MalT"/>
    <property type="match status" value="1"/>
</dbReference>
<dbReference type="Gene3D" id="3.40.50.300">
    <property type="entry name" value="P-loop containing nucleotide triphosphate hydrolases"/>
    <property type="match status" value="1"/>
</dbReference>
<dbReference type="Gene3D" id="1.25.40.10">
    <property type="entry name" value="Tetratricopeptide repeat domain"/>
    <property type="match status" value="1"/>
</dbReference>
<dbReference type="Gene3D" id="1.10.10.10">
    <property type="entry name" value="Winged helix-like DNA-binding domain superfamily/Winged helix DNA-binding domain"/>
    <property type="match status" value="1"/>
</dbReference>
<dbReference type="HAMAP" id="MF_01247">
    <property type="entry name" value="HTH_type_MalT"/>
    <property type="match status" value="1"/>
</dbReference>
<dbReference type="InterPro" id="IPR027417">
    <property type="entry name" value="P-loop_NTPase"/>
</dbReference>
<dbReference type="InterPro" id="IPR016032">
    <property type="entry name" value="Sig_transdc_resp-reg_C-effctor"/>
</dbReference>
<dbReference type="InterPro" id="IPR011990">
    <property type="entry name" value="TPR-like_helical_dom_sf"/>
</dbReference>
<dbReference type="InterPro" id="IPR041617">
    <property type="entry name" value="TPR_MalT"/>
</dbReference>
<dbReference type="InterPro" id="IPR023768">
    <property type="entry name" value="Tscrpt_reg_HTH_MalT"/>
</dbReference>
<dbReference type="InterPro" id="IPR000792">
    <property type="entry name" value="Tscrpt_reg_LuxR_C"/>
</dbReference>
<dbReference type="InterPro" id="IPR036388">
    <property type="entry name" value="WH-like_DNA-bd_sf"/>
</dbReference>
<dbReference type="NCBIfam" id="NF003420">
    <property type="entry name" value="PRK04841.1"/>
    <property type="match status" value="1"/>
</dbReference>
<dbReference type="PANTHER" id="PTHR44688">
    <property type="entry name" value="DNA-BINDING TRANSCRIPTIONAL ACTIVATOR DEVR_DOSR"/>
    <property type="match status" value="1"/>
</dbReference>
<dbReference type="PANTHER" id="PTHR44688:SF16">
    <property type="entry name" value="DNA-BINDING TRANSCRIPTIONAL ACTIVATOR DEVR_DOSR"/>
    <property type="match status" value="1"/>
</dbReference>
<dbReference type="Pfam" id="PF00196">
    <property type="entry name" value="GerE"/>
    <property type="match status" value="1"/>
</dbReference>
<dbReference type="Pfam" id="PF17874">
    <property type="entry name" value="TPR_MalT"/>
    <property type="match status" value="1"/>
</dbReference>
<dbReference type="PRINTS" id="PR00038">
    <property type="entry name" value="HTHLUXR"/>
</dbReference>
<dbReference type="SMART" id="SM00421">
    <property type="entry name" value="HTH_LUXR"/>
    <property type="match status" value="1"/>
</dbReference>
<dbReference type="SUPFAM" id="SSF46894">
    <property type="entry name" value="C-terminal effector domain of the bipartite response regulators"/>
    <property type="match status" value="1"/>
</dbReference>
<dbReference type="SUPFAM" id="SSF52540">
    <property type="entry name" value="P-loop containing nucleoside triphosphate hydrolases"/>
    <property type="match status" value="1"/>
</dbReference>
<dbReference type="SUPFAM" id="SSF48452">
    <property type="entry name" value="TPR-like"/>
    <property type="match status" value="1"/>
</dbReference>
<dbReference type="PROSITE" id="PS00622">
    <property type="entry name" value="HTH_LUXR_1"/>
    <property type="match status" value="1"/>
</dbReference>
<dbReference type="PROSITE" id="PS50043">
    <property type="entry name" value="HTH_LUXR_2"/>
    <property type="match status" value="1"/>
</dbReference>
<reference key="1">
    <citation type="journal article" date="2001" name="Nature">
        <title>Genome sequence of enterohaemorrhagic Escherichia coli O157:H7.</title>
        <authorList>
            <person name="Perna N.T."/>
            <person name="Plunkett G. III"/>
            <person name="Burland V."/>
            <person name="Mau B."/>
            <person name="Glasner J.D."/>
            <person name="Rose D.J."/>
            <person name="Mayhew G.F."/>
            <person name="Evans P.S."/>
            <person name="Gregor J."/>
            <person name="Kirkpatrick H.A."/>
            <person name="Posfai G."/>
            <person name="Hackett J."/>
            <person name="Klink S."/>
            <person name="Boutin A."/>
            <person name="Shao Y."/>
            <person name="Miller L."/>
            <person name="Grotbeck E.J."/>
            <person name="Davis N.W."/>
            <person name="Lim A."/>
            <person name="Dimalanta E.T."/>
            <person name="Potamousis K."/>
            <person name="Apodaca J."/>
            <person name="Anantharaman T.S."/>
            <person name="Lin J."/>
            <person name="Yen G."/>
            <person name="Schwartz D.C."/>
            <person name="Welch R.A."/>
            <person name="Blattner F.R."/>
        </authorList>
    </citation>
    <scope>NUCLEOTIDE SEQUENCE [LARGE SCALE GENOMIC DNA]</scope>
    <source>
        <strain>O157:H7 / EDL933 / ATCC 700927 / EHEC</strain>
    </source>
</reference>
<reference key="2">
    <citation type="journal article" date="2001" name="DNA Res.">
        <title>Complete genome sequence of enterohemorrhagic Escherichia coli O157:H7 and genomic comparison with a laboratory strain K-12.</title>
        <authorList>
            <person name="Hayashi T."/>
            <person name="Makino K."/>
            <person name="Ohnishi M."/>
            <person name="Kurokawa K."/>
            <person name="Ishii K."/>
            <person name="Yokoyama K."/>
            <person name="Han C.-G."/>
            <person name="Ohtsubo E."/>
            <person name="Nakayama K."/>
            <person name="Murata T."/>
            <person name="Tanaka M."/>
            <person name="Tobe T."/>
            <person name="Iida T."/>
            <person name="Takami H."/>
            <person name="Honda T."/>
            <person name="Sasakawa C."/>
            <person name="Ogasawara N."/>
            <person name="Yasunaga T."/>
            <person name="Kuhara S."/>
            <person name="Shiba T."/>
            <person name="Hattori M."/>
            <person name="Shinagawa H."/>
        </authorList>
    </citation>
    <scope>NUCLEOTIDE SEQUENCE [LARGE SCALE GENOMIC DNA]</scope>
    <source>
        <strain>O157:H7 / Sakai / RIMD 0509952 / EHEC</strain>
    </source>
</reference>
<organism>
    <name type="scientific">Escherichia coli O157:H7</name>
    <dbReference type="NCBI Taxonomy" id="83334"/>
    <lineage>
        <taxon>Bacteria</taxon>
        <taxon>Pseudomonadati</taxon>
        <taxon>Pseudomonadota</taxon>
        <taxon>Gammaproteobacteria</taxon>
        <taxon>Enterobacterales</taxon>
        <taxon>Enterobacteriaceae</taxon>
        <taxon>Escherichia</taxon>
    </lineage>
</organism>